<feature type="peptide" id="PRO_0000250419" description="Tryptophyllin-T2-1" evidence="1">
    <location>
        <begin position="1"/>
        <end position="5"/>
    </location>
</feature>
<feature type="modified residue" description="Phenylalanine amide" evidence="1">
    <location>
        <position position="5"/>
    </location>
</feature>
<dbReference type="GO" id="GO:0005576">
    <property type="term" value="C:extracellular region"/>
    <property type="evidence" value="ECO:0007669"/>
    <property type="project" value="UniProtKB-SubCell"/>
</dbReference>
<dbReference type="GO" id="GO:0006952">
    <property type="term" value="P:defense response"/>
    <property type="evidence" value="ECO:0007669"/>
    <property type="project" value="UniProtKB-KW"/>
</dbReference>
<accession>P84952</accession>
<name>TY21_PITAZ</name>
<keyword id="KW-0027">Amidation</keyword>
<keyword id="KW-0878">Amphibian defense peptide</keyword>
<keyword id="KW-0903">Direct protein sequencing</keyword>
<keyword id="KW-0964">Secreted</keyword>
<comment type="subcellular location">
    <subcellularLocation>
        <location evidence="1">Secreted</location>
    </subcellularLocation>
</comment>
<comment type="tissue specificity">
    <text evidence="1">Expressed by the skin glands.</text>
</comment>
<comment type="mass spectrometry" mass="691.28" method="MALDI" evidence="1"/>
<comment type="similarity">
    <text evidence="3">Belongs to the frog skin active peptide (FSAP) family. Tryptophillin subfamily.</text>
</comment>
<sequence length="5" mass="693">FPPWF</sequence>
<reference evidence="3" key="1">
    <citation type="journal article" date="2007" name="J. Proteome Res.">
        <title>Amphibian skin secretomics: application of parallel quadrupole time-of-flight mass spectrometry and peptide precursor cDNA cloning to rapidly characterize the skin secretory peptidome of Phyllomedusa hypochondrialis azurea: discovery of a novel peptide family, the hyposins.</title>
        <authorList>
            <person name="Thompson A.H."/>
            <person name="Bjourson A.J."/>
            <person name="Orr D.F."/>
            <person name="Shaw C."/>
            <person name="McClean S."/>
        </authorList>
    </citation>
    <scope>PROTEIN SEQUENCE</scope>
    <scope>SUBCELLULAR LOCATION</scope>
    <scope>TISSUE SPECIFICITY</scope>
    <scope>MASS SPECTROMETRY</scope>
    <scope>AMIDATION AT PHE-5</scope>
    <source>
        <tissue evidence="1">Skin secretion</tissue>
    </source>
</reference>
<organism>
    <name type="scientific">Pithecopus azureus</name>
    <name type="common">Orange-legged monkey tree frog</name>
    <name type="synonym">Phyllomedusa azurea</name>
    <dbReference type="NCBI Taxonomy" id="2034991"/>
    <lineage>
        <taxon>Eukaryota</taxon>
        <taxon>Metazoa</taxon>
        <taxon>Chordata</taxon>
        <taxon>Craniata</taxon>
        <taxon>Vertebrata</taxon>
        <taxon>Euteleostomi</taxon>
        <taxon>Amphibia</taxon>
        <taxon>Batrachia</taxon>
        <taxon>Anura</taxon>
        <taxon>Neobatrachia</taxon>
        <taxon>Hyloidea</taxon>
        <taxon>Hylidae</taxon>
        <taxon>Phyllomedusinae</taxon>
        <taxon>Pithecopus</taxon>
    </lineage>
</organism>
<evidence type="ECO:0000269" key="1">
    <source>
    </source>
</evidence>
<evidence type="ECO:0000303" key="2">
    <source>
    </source>
</evidence>
<evidence type="ECO:0000305" key="3"/>
<protein>
    <recommendedName>
        <fullName evidence="2">Tryptophyllin-T2-1</fullName>
        <shortName evidence="2">Pha-T2-1</shortName>
    </recommendedName>
    <alternativeName>
        <fullName evidence="2">Tryptophyllin-11</fullName>
    </alternativeName>
</protein>
<proteinExistence type="evidence at protein level"/>